<accession>A7HK75</accession>
<comment type="function">
    <text evidence="1">Catalyzes the initial step of the lipid cycle reactions in the biosynthesis of the cell wall peptidoglycan: transfers peptidoglycan precursor phospho-MurNAc-pentapeptide from UDP-MurNAc-pentapeptide onto the lipid carrier undecaprenyl phosphate, yielding undecaprenyl-pyrophosphoryl-MurNAc-pentapeptide, known as lipid I.</text>
</comment>
<comment type="catalytic activity">
    <reaction evidence="1">
        <text>UDP-N-acetyl-alpha-D-muramoyl-L-alanyl-gamma-D-glutamyl-meso-2,6-diaminopimeloyl-D-alanyl-D-alanine + di-trans,octa-cis-undecaprenyl phosphate = di-trans,octa-cis-undecaprenyl diphospho-N-acetyl-alpha-D-muramoyl-L-alanyl-D-glutamyl-meso-2,6-diaminopimeloyl-D-alanyl-D-alanine + UMP</text>
        <dbReference type="Rhea" id="RHEA:28386"/>
        <dbReference type="ChEBI" id="CHEBI:57865"/>
        <dbReference type="ChEBI" id="CHEBI:60392"/>
        <dbReference type="ChEBI" id="CHEBI:61386"/>
        <dbReference type="ChEBI" id="CHEBI:61387"/>
        <dbReference type="EC" id="2.7.8.13"/>
    </reaction>
</comment>
<comment type="cofactor">
    <cofactor evidence="1">
        <name>Mg(2+)</name>
        <dbReference type="ChEBI" id="CHEBI:18420"/>
    </cofactor>
</comment>
<comment type="pathway">
    <text evidence="1">Cell wall biogenesis; peptidoglycan biosynthesis.</text>
</comment>
<comment type="subcellular location">
    <subcellularLocation>
        <location evidence="1">Cell inner membrane</location>
        <topology evidence="1">Multi-pass membrane protein</topology>
    </subcellularLocation>
</comment>
<comment type="similarity">
    <text evidence="1">Belongs to the glycosyltransferase 4 family. MraY subfamily.</text>
</comment>
<sequence>MDIYSAATLLAEFVLGIIIFPKFIDYMKKLKLGQYIRQEGPDLHNYKEGTPTAGGIVFISLTVIAGLILKLPKELIFTLLFYGFIGFLDDFVSIVKKRSLGLRAWQKLALQFLFSIWIAYTILQYRTSSIFGITVPSWLFYLFTMLLVSGYSNATNLTDGIDGLAGWVFVTSMIPFMFFSKSSMEYKAIFVIIMPLLSFLVYNTRPAKVFMGDTGSLALGAYISTYALMTNNELSLLFFTPIFLLETISVILQVSSYKLRGKRLFKMAPIHHHFELLGWKEEKIVGVFSAWNLAIAIFYIAFFLNR</sequence>
<organism>
    <name type="scientific">Fervidobacterium nodosum (strain ATCC 35602 / DSM 5306 / Rt17-B1)</name>
    <dbReference type="NCBI Taxonomy" id="381764"/>
    <lineage>
        <taxon>Bacteria</taxon>
        <taxon>Thermotogati</taxon>
        <taxon>Thermotogota</taxon>
        <taxon>Thermotogae</taxon>
        <taxon>Thermotogales</taxon>
        <taxon>Fervidobacteriaceae</taxon>
        <taxon>Fervidobacterium</taxon>
    </lineage>
</organism>
<gene>
    <name evidence="1" type="primary">mraY</name>
    <name type="ordered locus">Fnod_0443</name>
</gene>
<feature type="chain" id="PRO_0000332535" description="Phospho-N-acetylmuramoyl-pentapeptide-transferase">
    <location>
        <begin position="1"/>
        <end position="306"/>
    </location>
</feature>
<feature type="transmembrane region" description="Helical" evidence="1">
    <location>
        <begin position="1"/>
        <end position="21"/>
    </location>
</feature>
<feature type="transmembrane region" description="Helical" evidence="1">
    <location>
        <begin position="49"/>
        <end position="69"/>
    </location>
</feature>
<feature type="transmembrane region" description="Helical" evidence="1">
    <location>
        <begin position="75"/>
        <end position="95"/>
    </location>
</feature>
<feature type="transmembrane region" description="Helical" evidence="1">
    <location>
        <begin position="104"/>
        <end position="124"/>
    </location>
</feature>
<feature type="transmembrane region" description="Helical" evidence="1">
    <location>
        <begin position="130"/>
        <end position="150"/>
    </location>
</feature>
<feature type="transmembrane region" description="Helical" evidence="1">
    <location>
        <begin position="160"/>
        <end position="180"/>
    </location>
</feature>
<feature type="transmembrane region" description="Helical" evidence="1">
    <location>
        <begin position="182"/>
        <end position="202"/>
    </location>
</feature>
<feature type="transmembrane region" description="Helical" evidence="1">
    <location>
        <begin position="209"/>
        <end position="229"/>
    </location>
</feature>
<feature type="transmembrane region" description="Helical" evidence="1">
    <location>
        <begin position="234"/>
        <end position="254"/>
    </location>
</feature>
<feature type="transmembrane region" description="Helical" evidence="1">
    <location>
        <begin position="284"/>
        <end position="304"/>
    </location>
</feature>
<name>MRAY_FERNB</name>
<evidence type="ECO:0000255" key="1">
    <source>
        <dbReference type="HAMAP-Rule" id="MF_00038"/>
    </source>
</evidence>
<protein>
    <recommendedName>
        <fullName evidence="1">Phospho-N-acetylmuramoyl-pentapeptide-transferase</fullName>
        <ecNumber evidence="1">2.7.8.13</ecNumber>
    </recommendedName>
    <alternativeName>
        <fullName evidence="1">UDP-MurNAc-pentapeptide phosphotransferase</fullName>
    </alternativeName>
</protein>
<dbReference type="EC" id="2.7.8.13" evidence="1"/>
<dbReference type="EMBL" id="CP000771">
    <property type="protein sequence ID" value="ABS60308.1"/>
    <property type="molecule type" value="Genomic_DNA"/>
</dbReference>
<dbReference type="RefSeq" id="WP_011993628.1">
    <property type="nucleotide sequence ID" value="NC_009718.1"/>
</dbReference>
<dbReference type="SMR" id="A7HK75"/>
<dbReference type="STRING" id="381764.Fnod_0443"/>
<dbReference type="KEGG" id="fno:Fnod_0443"/>
<dbReference type="eggNOG" id="COG0472">
    <property type="taxonomic scope" value="Bacteria"/>
</dbReference>
<dbReference type="HOGENOM" id="CLU_023982_0_1_0"/>
<dbReference type="OrthoDB" id="9805475at2"/>
<dbReference type="UniPathway" id="UPA00219"/>
<dbReference type="Proteomes" id="UP000002415">
    <property type="component" value="Chromosome"/>
</dbReference>
<dbReference type="GO" id="GO:0005886">
    <property type="term" value="C:plasma membrane"/>
    <property type="evidence" value="ECO:0007669"/>
    <property type="project" value="UniProtKB-SubCell"/>
</dbReference>
<dbReference type="GO" id="GO:0046872">
    <property type="term" value="F:metal ion binding"/>
    <property type="evidence" value="ECO:0007669"/>
    <property type="project" value="UniProtKB-KW"/>
</dbReference>
<dbReference type="GO" id="GO:0008963">
    <property type="term" value="F:phospho-N-acetylmuramoyl-pentapeptide-transferase activity"/>
    <property type="evidence" value="ECO:0007669"/>
    <property type="project" value="UniProtKB-UniRule"/>
</dbReference>
<dbReference type="GO" id="GO:0051992">
    <property type="term" value="F:UDP-N-acetylmuramoyl-L-alanyl-D-glutamyl-meso-2,6-diaminopimelyl-D-alanyl-D-alanine:undecaprenyl-phosphate transferase activity"/>
    <property type="evidence" value="ECO:0007669"/>
    <property type="project" value="RHEA"/>
</dbReference>
<dbReference type="GO" id="GO:0051301">
    <property type="term" value="P:cell division"/>
    <property type="evidence" value="ECO:0007669"/>
    <property type="project" value="UniProtKB-KW"/>
</dbReference>
<dbReference type="GO" id="GO:0071555">
    <property type="term" value="P:cell wall organization"/>
    <property type="evidence" value="ECO:0007669"/>
    <property type="project" value="UniProtKB-KW"/>
</dbReference>
<dbReference type="GO" id="GO:0009252">
    <property type="term" value="P:peptidoglycan biosynthetic process"/>
    <property type="evidence" value="ECO:0007669"/>
    <property type="project" value="UniProtKB-UniRule"/>
</dbReference>
<dbReference type="GO" id="GO:0008360">
    <property type="term" value="P:regulation of cell shape"/>
    <property type="evidence" value="ECO:0007669"/>
    <property type="project" value="UniProtKB-KW"/>
</dbReference>
<dbReference type="CDD" id="cd06852">
    <property type="entry name" value="GT_MraY"/>
    <property type="match status" value="1"/>
</dbReference>
<dbReference type="HAMAP" id="MF_00038">
    <property type="entry name" value="MraY"/>
    <property type="match status" value="1"/>
</dbReference>
<dbReference type="InterPro" id="IPR000715">
    <property type="entry name" value="Glycosyl_transferase_4"/>
</dbReference>
<dbReference type="InterPro" id="IPR003524">
    <property type="entry name" value="PNAcMuramoyl-5peptid_Trfase"/>
</dbReference>
<dbReference type="InterPro" id="IPR018480">
    <property type="entry name" value="PNAcMuramoyl-5peptid_Trfase_CS"/>
</dbReference>
<dbReference type="NCBIfam" id="TIGR00445">
    <property type="entry name" value="mraY"/>
    <property type="match status" value="1"/>
</dbReference>
<dbReference type="PANTHER" id="PTHR22926">
    <property type="entry name" value="PHOSPHO-N-ACETYLMURAMOYL-PENTAPEPTIDE-TRANSFERASE"/>
    <property type="match status" value="1"/>
</dbReference>
<dbReference type="PANTHER" id="PTHR22926:SF5">
    <property type="entry name" value="PHOSPHO-N-ACETYLMURAMOYL-PENTAPEPTIDE-TRANSFERASE HOMOLOG"/>
    <property type="match status" value="1"/>
</dbReference>
<dbReference type="Pfam" id="PF00953">
    <property type="entry name" value="Glycos_transf_4"/>
    <property type="match status" value="1"/>
</dbReference>
<dbReference type="PROSITE" id="PS01347">
    <property type="entry name" value="MRAY_1"/>
    <property type="match status" value="1"/>
</dbReference>
<dbReference type="PROSITE" id="PS01348">
    <property type="entry name" value="MRAY_2"/>
    <property type="match status" value="1"/>
</dbReference>
<reference key="1">
    <citation type="submission" date="2007-07" db="EMBL/GenBank/DDBJ databases">
        <title>Complete sequence of Fervidobacterium nodosum Rt17-B1.</title>
        <authorList>
            <consortium name="US DOE Joint Genome Institute"/>
            <person name="Copeland A."/>
            <person name="Lucas S."/>
            <person name="Lapidus A."/>
            <person name="Barry K."/>
            <person name="Glavina del Rio T."/>
            <person name="Dalin E."/>
            <person name="Tice H."/>
            <person name="Pitluck S."/>
            <person name="Saunders E."/>
            <person name="Brettin T."/>
            <person name="Bruce D."/>
            <person name="Detter J.C."/>
            <person name="Han C."/>
            <person name="Schmutz J."/>
            <person name="Larimer F."/>
            <person name="Land M."/>
            <person name="Hauser L."/>
            <person name="Kyrpides N."/>
            <person name="Mikhailova N."/>
            <person name="Nelson K."/>
            <person name="Gogarten J.P."/>
            <person name="Noll K."/>
            <person name="Richardson P."/>
        </authorList>
    </citation>
    <scope>NUCLEOTIDE SEQUENCE [LARGE SCALE GENOMIC DNA]</scope>
    <source>
        <strain>ATCC 35602 / DSM 5306 / Rt17-B1</strain>
    </source>
</reference>
<proteinExistence type="inferred from homology"/>
<keyword id="KW-0131">Cell cycle</keyword>
<keyword id="KW-0132">Cell division</keyword>
<keyword id="KW-0997">Cell inner membrane</keyword>
<keyword id="KW-1003">Cell membrane</keyword>
<keyword id="KW-0133">Cell shape</keyword>
<keyword id="KW-0961">Cell wall biogenesis/degradation</keyword>
<keyword id="KW-0460">Magnesium</keyword>
<keyword id="KW-0472">Membrane</keyword>
<keyword id="KW-0479">Metal-binding</keyword>
<keyword id="KW-0573">Peptidoglycan synthesis</keyword>
<keyword id="KW-1185">Reference proteome</keyword>
<keyword id="KW-0808">Transferase</keyword>
<keyword id="KW-0812">Transmembrane</keyword>
<keyword id="KW-1133">Transmembrane helix</keyword>